<reference key="1">
    <citation type="journal article" date="2003" name="Can. J. Microbiol.">
        <title>The recX gene product is involved in the SOS response in Herbaspirillum seropedicae.</title>
        <authorList>
            <person name="Galvao C.W."/>
            <person name="Pedrosa F.O."/>
            <person name="Souza E.M."/>
            <person name="Yates M.G."/>
            <person name="Chubatsu L.S."/>
            <person name="Steffens M.B.R."/>
        </authorList>
    </citation>
    <scope>NUCLEOTIDE SEQUENCE [GENOMIC DNA]</scope>
    <scope>FUNCTION</scope>
    <source>
        <strain>ATCC 35893 / DSM 6446 / LMG 6514 / Z78</strain>
    </source>
</reference>
<gene>
    <name type="primary">recX</name>
</gene>
<sequence length="154" mass="17606">MPRPPISLKARALKYLSSREHSRLELARKLAPYAQEGDDIEALLQWLEQSRFLSQERFSESLVHRRAARYGNQRILSELHGHGIEGEAIADLKADLAAGEAERAAQVLRRKFTAPPADAETRAKQMRFLQQRGFSHRSIREAFQTAWLDEDDPS</sequence>
<feature type="chain" id="PRO_0000162437" description="Regulatory protein RecX">
    <location>
        <begin position="1"/>
        <end position="154"/>
    </location>
</feature>
<accession>O86082</accession>
<dbReference type="EMBL" id="AF084045">
    <property type="protein sequence ID" value="AAC34592.2"/>
    <property type="molecule type" value="Genomic_DNA"/>
</dbReference>
<dbReference type="RefSeq" id="WP_013232693.1">
    <property type="nucleotide sequence ID" value="NZ_JWZZ01000002.1"/>
</dbReference>
<dbReference type="SMR" id="O86082"/>
<dbReference type="GeneID" id="29391279"/>
<dbReference type="KEGG" id="hsz:ACP92_03275"/>
<dbReference type="PATRIC" id="fig|964.11.peg.678"/>
<dbReference type="OMA" id="EPQDWFE"/>
<dbReference type="GO" id="GO:0005737">
    <property type="term" value="C:cytoplasm"/>
    <property type="evidence" value="ECO:0007669"/>
    <property type="project" value="UniProtKB-SubCell"/>
</dbReference>
<dbReference type="GO" id="GO:0006282">
    <property type="term" value="P:regulation of DNA repair"/>
    <property type="evidence" value="ECO:0007669"/>
    <property type="project" value="UniProtKB-UniRule"/>
</dbReference>
<dbReference type="Gene3D" id="1.10.10.10">
    <property type="entry name" value="Winged helix-like DNA-binding domain superfamily/Winged helix DNA-binding domain"/>
    <property type="match status" value="3"/>
</dbReference>
<dbReference type="HAMAP" id="MF_01114">
    <property type="entry name" value="RecX"/>
    <property type="match status" value="1"/>
</dbReference>
<dbReference type="InterPro" id="IPR053926">
    <property type="entry name" value="RecX_HTH_1st"/>
</dbReference>
<dbReference type="InterPro" id="IPR053924">
    <property type="entry name" value="RecX_HTH_2nd"/>
</dbReference>
<dbReference type="InterPro" id="IPR053925">
    <property type="entry name" value="RecX_HTH_3rd"/>
</dbReference>
<dbReference type="InterPro" id="IPR003783">
    <property type="entry name" value="Regulatory_RecX"/>
</dbReference>
<dbReference type="InterPro" id="IPR036388">
    <property type="entry name" value="WH-like_DNA-bd_sf"/>
</dbReference>
<dbReference type="NCBIfam" id="NF001055">
    <property type="entry name" value="PRK00117.2-5"/>
    <property type="match status" value="1"/>
</dbReference>
<dbReference type="PANTHER" id="PTHR33602">
    <property type="entry name" value="REGULATORY PROTEIN RECX FAMILY PROTEIN"/>
    <property type="match status" value="1"/>
</dbReference>
<dbReference type="PANTHER" id="PTHR33602:SF1">
    <property type="entry name" value="REGULATORY PROTEIN RECX FAMILY PROTEIN"/>
    <property type="match status" value="1"/>
</dbReference>
<dbReference type="Pfam" id="PF21982">
    <property type="entry name" value="RecX_HTH1"/>
    <property type="match status" value="1"/>
</dbReference>
<dbReference type="Pfam" id="PF02631">
    <property type="entry name" value="RecX_HTH2"/>
    <property type="match status" value="1"/>
</dbReference>
<dbReference type="Pfam" id="PF21981">
    <property type="entry name" value="RecX_HTH3"/>
    <property type="match status" value="1"/>
</dbReference>
<keyword id="KW-0963">Cytoplasm</keyword>
<comment type="function">
    <text evidence="1">Modulates RecA activity.</text>
</comment>
<comment type="subcellular location">
    <subcellularLocation>
        <location evidence="2">Cytoplasm</location>
    </subcellularLocation>
</comment>
<comment type="similarity">
    <text evidence="2">Belongs to the RecX family.</text>
</comment>
<evidence type="ECO:0000269" key="1">
    <source>
    </source>
</evidence>
<evidence type="ECO:0000305" key="2"/>
<proteinExistence type="inferred from homology"/>
<organism>
    <name type="scientific">Herbaspirillum seropedicae</name>
    <dbReference type="NCBI Taxonomy" id="964"/>
    <lineage>
        <taxon>Bacteria</taxon>
        <taxon>Pseudomonadati</taxon>
        <taxon>Pseudomonadota</taxon>
        <taxon>Betaproteobacteria</taxon>
        <taxon>Burkholderiales</taxon>
        <taxon>Oxalobacteraceae</taxon>
        <taxon>Herbaspirillum</taxon>
    </lineage>
</organism>
<protein>
    <recommendedName>
        <fullName>Regulatory protein RecX</fullName>
    </recommendedName>
</protein>
<name>RECX_HERSE</name>